<comment type="function">
    <text>Light-harvesting photosynthetic bile pigment-protein from the phycobiliprotein complex. Allophycocyanin has a maximum absorption at approximately 650 nanometers.</text>
</comment>
<comment type="subunit">
    <text evidence="1">Heterodimer of an alpha and a beta chain.</text>
</comment>
<comment type="subcellular location">
    <subcellularLocation>
        <location evidence="1">Cellular thylakoid membrane</location>
        <topology evidence="1">Peripheral membrane protein</topology>
        <orientation evidence="1">Cytoplasmic side</orientation>
    </subcellularLocation>
    <text evidence="1">Forms the core of the phycobilisome.</text>
</comment>
<comment type="induction">
    <text evidence="2 3">Constitutively transcribed in vegetative cells, not expressed during hormogonia differentiation in red light.</text>
</comment>
<comment type="PTM">
    <text evidence="1">Contains one covalently linked phycocyanobilin chromophore.</text>
</comment>
<comment type="similarity">
    <text evidence="5">Belongs to the phycobiliprotein family.</text>
</comment>
<feature type="chain" id="PRO_0000199096" description="Allophycocyanin beta chain">
    <location>
        <begin position="1"/>
        <end position="162"/>
    </location>
</feature>
<feature type="binding site" description="covalent" evidence="1">
    <location>
        <position position="82"/>
    </location>
    <ligand>
        <name>(2R,3E)-phycocyanobilin</name>
        <dbReference type="ChEBI" id="CHEBI:85275"/>
    </ligand>
</feature>
<feature type="modified residue" description="N4-methylasparagine" evidence="1">
    <location>
        <position position="72"/>
    </location>
</feature>
<evidence type="ECO:0000250" key="1"/>
<evidence type="ECO:0000269" key="2">
    <source>
    </source>
</evidence>
<evidence type="ECO:0000269" key="3">
    <source>
    </source>
</evidence>
<evidence type="ECO:0000303" key="4">
    <source>
    </source>
</evidence>
<evidence type="ECO:0000305" key="5"/>
<dbReference type="EMBL" id="M20806">
    <property type="protein sequence ID" value="AAA24875.1"/>
    <property type="molecule type" value="Genomic_DNA"/>
</dbReference>
<dbReference type="SMR" id="P16571"/>
<dbReference type="GO" id="GO:0030089">
    <property type="term" value="C:phycobilisome"/>
    <property type="evidence" value="ECO:0007669"/>
    <property type="project" value="UniProtKB-KW"/>
</dbReference>
<dbReference type="GO" id="GO:0031676">
    <property type="term" value="C:plasma membrane-derived thylakoid membrane"/>
    <property type="evidence" value="ECO:0007669"/>
    <property type="project" value="UniProtKB-SubCell"/>
</dbReference>
<dbReference type="GO" id="GO:0015979">
    <property type="term" value="P:photosynthesis"/>
    <property type="evidence" value="ECO:0007669"/>
    <property type="project" value="UniProtKB-KW"/>
</dbReference>
<dbReference type="CDD" id="cd12126">
    <property type="entry name" value="APC_beta"/>
    <property type="match status" value="1"/>
</dbReference>
<dbReference type="Gene3D" id="1.10.490.20">
    <property type="entry name" value="Phycocyanins"/>
    <property type="match status" value="1"/>
</dbReference>
<dbReference type="InterPro" id="IPR006245">
    <property type="entry name" value="Allophycocyanin_b"/>
</dbReference>
<dbReference type="InterPro" id="IPR009050">
    <property type="entry name" value="Globin-like_sf"/>
</dbReference>
<dbReference type="InterPro" id="IPR012128">
    <property type="entry name" value="Phycobilisome_asu/bsu"/>
</dbReference>
<dbReference type="InterPro" id="IPR038719">
    <property type="entry name" value="Phycobilisome_asu/bsu_sf"/>
</dbReference>
<dbReference type="NCBIfam" id="TIGR01337">
    <property type="entry name" value="apcB"/>
    <property type="match status" value="1"/>
</dbReference>
<dbReference type="PANTHER" id="PTHR34011:SF3">
    <property type="entry name" value="ALLOPHYCOCYANIN BETA CHAIN"/>
    <property type="match status" value="1"/>
</dbReference>
<dbReference type="PANTHER" id="PTHR34011">
    <property type="entry name" value="PHYCOBILISOME 32.1 KDA LINKER POLYPEPTIDE, PHYCOCYANIN-ASSOCIATED, ROD 2-RELATED"/>
    <property type="match status" value="1"/>
</dbReference>
<dbReference type="Pfam" id="PF00502">
    <property type="entry name" value="Phycobilisome"/>
    <property type="match status" value="1"/>
</dbReference>
<dbReference type="PIRSF" id="PIRSF000081">
    <property type="entry name" value="Phycocyanin"/>
    <property type="match status" value="1"/>
</dbReference>
<dbReference type="SUPFAM" id="SSF46458">
    <property type="entry name" value="Globin-like"/>
    <property type="match status" value="1"/>
</dbReference>
<name>APCB_MICDP</name>
<keyword id="KW-0042">Antenna complex</keyword>
<keyword id="KW-0089">Bile pigment</keyword>
<keyword id="KW-0157">Chromophore</keyword>
<keyword id="KW-0249">Electron transport</keyword>
<keyword id="KW-0472">Membrane</keyword>
<keyword id="KW-0488">Methylation</keyword>
<keyword id="KW-0602">Photosynthesis</keyword>
<keyword id="KW-0605">Phycobilisome</keyword>
<keyword id="KW-0793">Thylakoid</keyword>
<keyword id="KW-0813">Transport</keyword>
<proteinExistence type="evidence at transcript level"/>
<organism>
    <name type="scientific">Microchaete diplosiphon</name>
    <name type="common">Fremyella diplosiphon</name>
    <dbReference type="NCBI Taxonomy" id="1197"/>
    <lineage>
        <taxon>Bacteria</taxon>
        <taxon>Bacillati</taxon>
        <taxon>Cyanobacteriota</taxon>
        <taxon>Cyanophyceae</taxon>
        <taxon>Nostocales</taxon>
        <taxon>Rivulariaceae</taxon>
        <taxon>Microchaete</taxon>
    </lineage>
</organism>
<gene>
    <name evidence="4" type="primary">apcB1</name>
</gene>
<protein>
    <recommendedName>
        <fullName>Allophycocyanin beta chain</fullName>
    </recommendedName>
</protein>
<reference key="1">
    <citation type="journal article" date="1988" name="J. Bacteriol.">
        <title>Genes encoding core components of the phycobilisome in the cyanobacterium Calothrix sp. strain PCC 7601: occurrence of a multigene family.</title>
        <authorList>
            <person name="Houmard J."/>
            <person name="Capuano V."/>
            <person name="Coursin T."/>
            <person name="Tandeau de Marsac N."/>
        </authorList>
    </citation>
    <scope>NUCLEOTIDE SEQUENCE [GENOMIC DNA]</scope>
    <scope>INDUCTION</scope>
    <source>
        <strain>UTEX 481 / PCC 7601 / SAG 1410-2</strain>
    </source>
</reference>
<reference key="2">
    <citation type="journal article" date="1991" name="Plant Cell">
        <title>Hormogonium Differentiation in the Cyanobacterium Calothrix: A Photoregulated Developmental Process.</title>
        <authorList>
            <person name="Damerval T."/>
            <person name="Guglielmi G."/>
            <person name="Houmard J."/>
            <person name="De Marsac N.T."/>
        </authorList>
    </citation>
    <scope>INDUCTION</scope>
    <source>
        <strain>UTEX 481 / PCC 7601 / SAG 1410-2</strain>
    </source>
</reference>
<sequence>MAQDAITSVINSADVQGKYLDSAALDKLKGYFGTGELRVRAASTISANAAAIVKEAVAKSLLYSDVTRPGGNMYTTRRYAACIRDLDYYLRYATYAMLAGDPSILDERVLNGLKETYNSLGVPVSSTVQAIQAIKEVTASLVGSDAGKEMGVYLDYISSGLS</sequence>
<accession>P16571</accession>